<organism>
    <name type="scientific">Pseudomonas aeruginosa (strain UCBPP-PA14)</name>
    <dbReference type="NCBI Taxonomy" id="208963"/>
    <lineage>
        <taxon>Bacteria</taxon>
        <taxon>Pseudomonadati</taxon>
        <taxon>Pseudomonadota</taxon>
        <taxon>Gammaproteobacteria</taxon>
        <taxon>Pseudomonadales</taxon>
        <taxon>Pseudomonadaceae</taxon>
        <taxon>Pseudomonas</taxon>
    </lineage>
</organism>
<keyword id="KW-0238">DNA-binding</keyword>
<keyword id="KW-0678">Repressor</keyword>
<keyword id="KW-0804">Transcription</keyword>
<keyword id="KW-0805">Transcription regulation</keyword>
<feature type="chain" id="PRO_0000442135" description="HTH-type transcriptional repressor PA14_22550">
    <location>
        <begin position="1"/>
        <end position="317"/>
    </location>
</feature>
<feature type="domain" description="HTH lysR-type" evidence="1">
    <location>
        <begin position="1"/>
        <end position="59"/>
    </location>
</feature>
<feature type="DNA-binding region" description="H-T-H motif" evidence="1">
    <location>
        <begin position="19"/>
        <end position="38"/>
    </location>
</feature>
<accession>A0A0H2ZDG9</accession>
<protein>
    <recommendedName>
        <fullName evidence="4">HTH-type transcriptional repressor PA14_22550</fullName>
    </recommendedName>
</protein>
<comment type="function">
    <text evidence="2">Represses the transcription of the operon that consists of PA14_22510 to PA14_22540.</text>
</comment>
<comment type="disruption phenotype">
    <text evidence="2">Inactivation of this gene produces a 3.4-fold increase in the expression of fldP in cells untreated by H(2)O(2).</text>
</comment>
<comment type="similarity">
    <text evidence="3">Belongs to the LysR transcriptional regulatory family.</text>
</comment>
<comment type="sequence caution" evidence="3">
    <conflict type="erroneous initiation">
        <sequence resource="EMBL-CDS" id="ABJ12449"/>
    </conflict>
    <text>Truncated N-terminus.</text>
</comment>
<name>LYSRL_PSEAB</name>
<gene>
    <name evidence="5" type="ordered locus">PA14_22550</name>
</gene>
<proteinExistence type="inferred from homology"/>
<reference key="1">
    <citation type="journal article" date="2006" name="Genome Biol.">
        <title>Genomic analysis reveals that Pseudomonas aeruginosa virulence is combinatorial.</title>
        <authorList>
            <person name="Lee D.G."/>
            <person name="Urbach J.M."/>
            <person name="Wu G."/>
            <person name="Liberati N.T."/>
            <person name="Feinbaum R.L."/>
            <person name="Miyata S."/>
            <person name="Diggins L.T."/>
            <person name="He J."/>
            <person name="Saucier M."/>
            <person name="Deziel E."/>
            <person name="Friedman L."/>
            <person name="Li L."/>
            <person name="Grills G."/>
            <person name="Montgomery K."/>
            <person name="Kucherlapati R."/>
            <person name="Rahme L.G."/>
            <person name="Ausubel F.M."/>
        </authorList>
    </citation>
    <scope>NUCLEOTIDE SEQUENCE [LARGE SCALE GENOMIC DNA]</scope>
    <source>
        <strain>UCBPP-PA14</strain>
    </source>
</reference>
<reference key="2">
    <citation type="journal article" date="2014" name="PLoS Genet.">
        <title>A long-chain flavodoxin protects Pseudomonas aeruginosa from oxidative stress and host bacterial clearance.</title>
        <authorList>
            <person name="Moyano A.J."/>
            <person name="Tobares R.A."/>
            <person name="Rizzi Y.S."/>
            <person name="Krapp A.R."/>
            <person name="Mondotte J.A."/>
            <person name="Bocco J.L."/>
            <person name="Saleh M.C."/>
            <person name="Carrillo N."/>
            <person name="Smania A.M."/>
        </authorList>
    </citation>
    <scope>FUNCTION</scope>
    <scope>DISRUPTION PHENOTYPE</scope>
    <source>
        <strain>UCBPP-PA14</strain>
    </source>
</reference>
<dbReference type="EMBL" id="CP000438">
    <property type="protein sequence ID" value="ABJ12449.1"/>
    <property type="status" value="ALT_INIT"/>
    <property type="molecule type" value="Genomic_DNA"/>
</dbReference>
<dbReference type="RefSeq" id="WP_016254253.1">
    <property type="nucleotide sequence ID" value="NZ_CP034244.1"/>
</dbReference>
<dbReference type="SMR" id="A0A0H2ZDG9"/>
<dbReference type="KEGG" id="pau:PA14_22550"/>
<dbReference type="HOGENOM" id="CLU_039613_16_3_6"/>
<dbReference type="BioCyc" id="PAER208963:G1G74-1878-MONOMER"/>
<dbReference type="Proteomes" id="UP000000653">
    <property type="component" value="Chromosome"/>
</dbReference>
<dbReference type="GO" id="GO:0003700">
    <property type="term" value="F:DNA-binding transcription factor activity"/>
    <property type="evidence" value="ECO:0007669"/>
    <property type="project" value="InterPro"/>
</dbReference>
<dbReference type="GO" id="GO:0043565">
    <property type="term" value="F:sequence-specific DNA binding"/>
    <property type="evidence" value="ECO:0007669"/>
    <property type="project" value="TreeGrafter"/>
</dbReference>
<dbReference type="GO" id="GO:0006351">
    <property type="term" value="P:DNA-templated transcription"/>
    <property type="evidence" value="ECO:0007669"/>
    <property type="project" value="TreeGrafter"/>
</dbReference>
<dbReference type="CDD" id="cd08472">
    <property type="entry name" value="PBP2_CrgA_like_3"/>
    <property type="match status" value="1"/>
</dbReference>
<dbReference type="FunFam" id="1.10.10.10:FF:000001">
    <property type="entry name" value="LysR family transcriptional regulator"/>
    <property type="match status" value="1"/>
</dbReference>
<dbReference type="Gene3D" id="3.40.190.290">
    <property type="match status" value="1"/>
</dbReference>
<dbReference type="Gene3D" id="1.10.10.10">
    <property type="entry name" value="Winged helix-like DNA-binding domain superfamily/Winged helix DNA-binding domain"/>
    <property type="match status" value="1"/>
</dbReference>
<dbReference type="InterPro" id="IPR005119">
    <property type="entry name" value="LysR_subst-bd"/>
</dbReference>
<dbReference type="InterPro" id="IPR000847">
    <property type="entry name" value="Tscrpt_reg_HTH_LysR"/>
</dbReference>
<dbReference type="InterPro" id="IPR036388">
    <property type="entry name" value="WH-like_DNA-bd_sf"/>
</dbReference>
<dbReference type="InterPro" id="IPR036390">
    <property type="entry name" value="WH_DNA-bd_sf"/>
</dbReference>
<dbReference type="PANTHER" id="PTHR30537">
    <property type="entry name" value="HTH-TYPE TRANSCRIPTIONAL REGULATOR"/>
    <property type="match status" value="1"/>
</dbReference>
<dbReference type="PANTHER" id="PTHR30537:SF17">
    <property type="entry name" value="LYSR-FAMILY REGULATORY PROTEIN"/>
    <property type="match status" value="1"/>
</dbReference>
<dbReference type="Pfam" id="PF00126">
    <property type="entry name" value="HTH_1"/>
    <property type="match status" value="1"/>
</dbReference>
<dbReference type="Pfam" id="PF03466">
    <property type="entry name" value="LysR_substrate"/>
    <property type="match status" value="1"/>
</dbReference>
<dbReference type="SUPFAM" id="SSF53850">
    <property type="entry name" value="Periplasmic binding protein-like II"/>
    <property type="match status" value="1"/>
</dbReference>
<dbReference type="SUPFAM" id="SSF46785">
    <property type="entry name" value="Winged helix' DNA-binding domain"/>
    <property type="match status" value="1"/>
</dbReference>
<dbReference type="PROSITE" id="PS50931">
    <property type="entry name" value="HTH_LYSR"/>
    <property type="match status" value="1"/>
</dbReference>
<sequence>MDKLTAMATFVKVVDAGSFTRAADALGLPKARVSQRVSDLEKHLGVRLLNRTTRALSLTHDGSAYFDKCQVLLQQIDELEATLRGGTATPIGRLRVDSLITIARWVIAPRLHDFQARYPRIQLRLSSSDRISNLLEDGIDCTIRGGALKDSSMIARHLCDIQMGLYASPEYLASIGGVDSPNDLSQFRRLSWFSGRERNPFMWELESGPERFVVQSGDGMQFDEPDVAISACMAGSGICPGAPFAVAGFVRAGKLVPVLPQWHFSAAPVHVIYPGSRHLSVRVRCFVNWVMELFAENPEIQLTPIALALESGLAQRT</sequence>
<evidence type="ECO:0000255" key="1">
    <source>
        <dbReference type="PROSITE-ProRule" id="PRU00253"/>
    </source>
</evidence>
<evidence type="ECO:0000269" key="2">
    <source>
    </source>
</evidence>
<evidence type="ECO:0000305" key="3"/>
<evidence type="ECO:0000305" key="4">
    <source>
    </source>
</evidence>
<evidence type="ECO:0000312" key="5">
    <source>
        <dbReference type="EMBL" id="ABJ12449.1"/>
    </source>
</evidence>